<sequence length="247" mass="27659">MLRRVTLKETWEVAKNIKAFRFDEKLDFTPGQFIMVWLPGVNEKPFSLADKDLIVVKRVGPFTSKLFTLEEGDYLWIRGPYGNGFKEVKGKVALVAGGIGIPPIYALAKHGKLEEKVLIYGARGKDELALLDIENYVDEIVITTDDGSYGIKGFPTDVLAKRKEEFSQVYACGPEIMLAKVLEIMNYERTQISAERYMKCGIGICGSCALGPYLVCRDGPVFTGEQLKDTEFGKFTRLPDGRIKGLR</sequence>
<dbReference type="EMBL" id="BA000001">
    <property type="protein sequence ID" value="BAA31092.1"/>
    <property type="status" value="ALT_INIT"/>
    <property type="molecule type" value="Genomic_DNA"/>
</dbReference>
<dbReference type="PIR" id="E71212">
    <property type="entry name" value="E71212"/>
</dbReference>
<dbReference type="RefSeq" id="WP_010886030.1">
    <property type="nucleotide sequence ID" value="NC_000961.1"/>
</dbReference>
<dbReference type="SMR" id="O57738"/>
<dbReference type="STRING" id="70601.gene:9378978"/>
<dbReference type="EnsemblBacteria" id="BAA31092">
    <property type="protein sequence ID" value="BAA31092"/>
    <property type="gene ID" value="BAA31092"/>
</dbReference>
<dbReference type="GeneID" id="1442812"/>
<dbReference type="KEGG" id="pho:PH1965"/>
<dbReference type="eggNOG" id="arCOG02199">
    <property type="taxonomic scope" value="Archaea"/>
</dbReference>
<dbReference type="OrthoDB" id="35401at2157"/>
<dbReference type="UniPathway" id="UPA00070">
    <property type="reaction ID" value="UER00945"/>
</dbReference>
<dbReference type="Proteomes" id="UP000000752">
    <property type="component" value="Chromosome"/>
</dbReference>
<dbReference type="GO" id="GO:0051537">
    <property type="term" value="F:2 iron, 2 sulfur cluster binding"/>
    <property type="evidence" value="ECO:0007669"/>
    <property type="project" value="UniProtKB-KW"/>
</dbReference>
<dbReference type="GO" id="GO:0009055">
    <property type="term" value="F:electron transfer activity"/>
    <property type="evidence" value="ECO:0007669"/>
    <property type="project" value="UniProtKB-UniRule"/>
</dbReference>
<dbReference type="GO" id="GO:0050660">
    <property type="term" value="F:flavin adenine dinucleotide binding"/>
    <property type="evidence" value="ECO:0007669"/>
    <property type="project" value="InterPro"/>
</dbReference>
<dbReference type="GO" id="GO:0046872">
    <property type="term" value="F:metal ion binding"/>
    <property type="evidence" value="ECO:0007669"/>
    <property type="project" value="UniProtKB-KW"/>
</dbReference>
<dbReference type="GO" id="GO:0016491">
    <property type="term" value="F:oxidoreductase activity"/>
    <property type="evidence" value="ECO:0007669"/>
    <property type="project" value="InterPro"/>
</dbReference>
<dbReference type="GO" id="GO:0044205">
    <property type="term" value="P:'de novo' UMP biosynthetic process"/>
    <property type="evidence" value="ECO:0007669"/>
    <property type="project" value="UniProtKB-UniRule"/>
</dbReference>
<dbReference type="CDD" id="cd06220">
    <property type="entry name" value="DHOD_e_trans_like2"/>
    <property type="match status" value="1"/>
</dbReference>
<dbReference type="Gene3D" id="2.10.240.10">
    <property type="entry name" value="Dihydroorotate dehydrogenase, electron transfer subunit"/>
    <property type="match status" value="1"/>
</dbReference>
<dbReference type="Gene3D" id="3.40.50.80">
    <property type="entry name" value="Nucleotide-binding domain of ferredoxin-NADP reductase (FNR) module"/>
    <property type="match status" value="1"/>
</dbReference>
<dbReference type="Gene3D" id="2.40.30.10">
    <property type="entry name" value="Translation factors"/>
    <property type="match status" value="1"/>
</dbReference>
<dbReference type="HAMAP" id="MF_01211">
    <property type="entry name" value="DHODB_Fe_S_bind"/>
    <property type="match status" value="1"/>
</dbReference>
<dbReference type="InterPro" id="IPR012165">
    <property type="entry name" value="Cyt_c3_hydrogenase_gsu"/>
</dbReference>
<dbReference type="InterPro" id="IPR037117">
    <property type="entry name" value="Dihydroorotate_DH_ele_sf"/>
</dbReference>
<dbReference type="InterPro" id="IPR019480">
    <property type="entry name" value="Dihydroorotate_DH_Fe-S-bd"/>
</dbReference>
<dbReference type="InterPro" id="IPR023455">
    <property type="entry name" value="Dihydroorotate_DHASE_ETsu"/>
</dbReference>
<dbReference type="InterPro" id="IPR017927">
    <property type="entry name" value="FAD-bd_FR_type"/>
</dbReference>
<dbReference type="InterPro" id="IPR039261">
    <property type="entry name" value="FNR_nucleotide-bd"/>
</dbReference>
<dbReference type="InterPro" id="IPR050353">
    <property type="entry name" value="PyrK_electron_transfer"/>
</dbReference>
<dbReference type="InterPro" id="IPR017938">
    <property type="entry name" value="Riboflavin_synthase-like_b-brl"/>
</dbReference>
<dbReference type="NCBIfam" id="NF000796">
    <property type="entry name" value="PRK00054.1-1"/>
    <property type="match status" value="1"/>
</dbReference>
<dbReference type="PANTHER" id="PTHR43513">
    <property type="entry name" value="DIHYDROOROTATE DEHYDROGENASE B (NAD(+)), ELECTRON TRANSFER SUBUNIT"/>
    <property type="match status" value="1"/>
</dbReference>
<dbReference type="PANTHER" id="PTHR43513:SF3">
    <property type="entry name" value="DIHYDROOROTATE DEHYDROGENASE B (NAD(+)), ELECTRON TRANSFER SUBUNIT-RELATED"/>
    <property type="match status" value="1"/>
</dbReference>
<dbReference type="Pfam" id="PF10418">
    <property type="entry name" value="DHODB_Fe-S_bind"/>
    <property type="match status" value="1"/>
</dbReference>
<dbReference type="PIRSF" id="PIRSF006816">
    <property type="entry name" value="Cyc3_hyd_g"/>
    <property type="match status" value="1"/>
</dbReference>
<dbReference type="PRINTS" id="PR00409">
    <property type="entry name" value="PHDIOXRDTASE"/>
</dbReference>
<dbReference type="SUPFAM" id="SSF52343">
    <property type="entry name" value="Ferredoxin reductase-like, C-terminal NADP-linked domain"/>
    <property type="match status" value="1"/>
</dbReference>
<dbReference type="SUPFAM" id="SSF63380">
    <property type="entry name" value="Riboflavin synthase domain-like"/>
    <property type="match status" value="1"/>
</dbReference>
<dbReference type="PROSITE" id="PS00197">
    <property type="entry name" value="2FE2S_FER_1"/>
    <property type="match status" value="1"/>
</dbReference>
<dbReference type="PROSITE" id="PS51384">
    <property type="entry name" value="FAD_FR"/>
    <property type="match status" value="1"/>
</dbReference>
<feature type="chain" id="PRO_0000148381" description="Probable dihydroorotate dehydrogenase B (NAD(+)), electron transfer subunit">
    <location>
        <begin position="1"/>
        <end position="247"/>
    </location>
</feature>
<feature type="domain" description="FAD-binding FR-type" evidence="1">
    <location>
        <begin position="1"/>
        <end position="87"/>
    </location>
</feature>
<feature type="binding site" evidence="1">
    <location>
        <position position="200"/>
    </location>
    <ligand>
        <name>[2Fe-2S] cluster</name>
        <dbReference type="ChEBI" id="CHEBI:190135"/>
    </ligand>
</feature>
<feature type="binding site" evidence="1">
    <location>
        <position position="205"/>
    </location>
    <ligand>
        <name>[2Fe-2S] cluster</name>
        <dbReference type="ChEBI" id="CHEBI:190135"/>
    </ligand>
</feature>
<feature type="binding site" evidence="1">
    <location>
        <position position="208"/>
    </location>
    <ligand>
        <name>[2Fe-2S] cluster</name>
        <dbReference type="ChEBI" id="CHEBI:190135"/>
    </ligand>
</feature>
<feature type="binding site" evidence="1">
    <location>
        <position position="216"/>
    </location>
    <ligand>
        <name>[2Fe-2S] cluster</name>
        <dbReference type="ChEBI" id="CHEBI:190135"/>
    </ligand>
</feature>
<keyword id="KW-0001">2Fe-2S</keyword>
<keyword id="KW-0249">Electron transport</keyword>
<keyword id="KW-0274">FAD</keyword>
<keyword id="KW-0285">Flavoprotein</keyword>
<keyword id="KW-0408">Iron</keyword>
<keyword id="KW-0411">Iron-sulfur</keyword>
<keyword id="KW-0479">Metal-binding</keyword>
<keyword id="KW-0665">Pyrimidine biosynthesis</keyword>
<keyword id="KW-0813">Transport</keyword>
<gene>
    <name evidence="1" type="primary">pyrK</name>
    <name type="ordered locus">PH1965</name>
</gene>
<comment type="function">
    <text evidence="1">Responsible for channeling the electrons from the oxidation of dihydroorotate from the FMN redox center in the PyrD type B subunit to the ultimate electron acceptor NAD(+).</text>
</comment>
<comment type="cofactor">
    <cofactor evidence="1">
        <name>[2Fe-2S] cluster</name>
        <dbReference type="ChEBI" id="CHEBI:190135"/>
    </cofactor>
    <text evidence="1">Binds 1 [2Fe-2S] cluster per subunit.</text>
</comment>
<comment type="cofactor">
    <cofactor evidence="1">
        <name>FAD</name>
        <dbReference type="ChEBI" id="CHEBI:57692"/>
    </cofactor>
    <text evidence="1">Binds 1 FAD per subunit.</text>
</comment>
<comment type="pathway">
    <text evidence="1">Pyrimidine metabolism; UMP biosynthesis via de novo pathway; orotate from (S)-dihydroorotate (NAD(+) route): step 1/1.</text>
</comment>
<comment type="subunit">
    <text evidence="1">Heterotetramer of 2 PyrK and 2 PyrD type B subunits.</text>
</comment>
<comment type="similarity">
    <text evidence="1">Belongs to the PyrK family.</text>
</comment>
<comment type="sequence caution" evidence="2">
    <conflict type="erroneous initiation">
        <sequence resource="EMBL-CDS" id="BAA31092"/>
    </conflict>
</comment>
<protein>
    <recommendedName>
        <fullName evidence="1">Probable dihydroorotate dehydrogenase B (NAD(+)), electron transfer subunit</fullName>
    </recommendedName>
    <alternativeName>
        <fullName evidence="1">Dihydroorotate oxidase B, electron transfer subunit</fullName>
    </alternativeName>
</protein>
<reference key="1">
    <citation type="journal article" date="1998" name="DNA Res.">
        <title>Complete sequence and gene organization of the genome of a hyper-thermophilic archaebacterium, Pyrococcus horikoshii OT3.</title>
        <authorList>
            <person name="Kawarabayasi Y."/>
            <person name="Sawada M."/>
            <person name="Horikawa H."/>
            <person name="Haikawa Y."/>
            <person name="Hino Y."/>
            <person name="Yamamoto S."/>
            <person name="Sekine M."/>
            <person name="Baba S."/>
            <person name="Kosugi H."/>
            <person name="Hosoyama A."/>
            <person name="Nagai Y."/>
            <person name="Sakai M."/>
            <person name="Ogura K."/>
            <person name="Otsuka R."/>
            <person name="Nakazawa H."/>
            <person name="Takamiya M."/>
            <person name="Ohfuku Y."/>
            <person name="Funahashi T."/>
            <person name="Tanaka T."/>
            <person name="Kudoh Y."/>
            <person name="Yamazaki J."/>
            <person name="Kushida N."/>
            <person name="Oguchi A."/>
            <person name="Aoki K."/>
            <person name="Yoshizawa T."/>
            <person name="Nakamura Y."/>
            <person name="Robb F.T."/>
            <person name="Horikoshi K."/>
            <person name="Masuchi Y."/>
            <person name="Shizuya H."/>
            <person name="Kikuchi H."/>
        </authorList>
    </citation>
    <scope>NUCLEOTIDE SEQUENCE [LARGE SCALE GENOMIC DNA]</scope>
    <source>
        <strain>ATCC 700860 / DSM 12428 / JCM 9974 / NBRC 100139 / OT-3</strain>
    </source>
</reference>
<name>PYRK_PYRHO</name>
<evidence type="ECO:0000255" key="1">
    <source>
        <dbReference type="HAMAP-Rule" id="MF_01211"/>
    </source>
</evidence>
<evidence type="ECO:0000305" key="2"/>
<accession>O57738</accession>
<proteinExistence type="inferred from homology"/>
<organism>
    <name type="scientific">Pyrococcus horikoshii (strain ATCC 700860 / DSM 12428 / JCM 9974 / NBRC 100139 / OT-3)</name>
    <dbReference type="NCBI Taxonomy" id="70601"/>
    <lineage>
        <taxon>Archaea</taxon>
        <taxon>Methanobacteriati</taxon>
        <taxon>Methanobacteriota</taxon>
        <taxon>Thermococci</taxon>
        <taxon>Thermococcales</taxon>
        <taxon>Thermococcaceae</taxon>
        <taxon>Pyrococcus</taxon>
    </lineage>
</organism>